<dbReference type="EC" id="7.2.2.6" evidence="1"/>
<dbReference type="EMBL" id="AE006468">
    <property type="protein sequence ID" value="AAL19649.1"/>
    <property type="molecule type" value="Genomic_DNA"/>
</dbReference>
<dbReference type="RefSeq" id="NP_459690.1">
    <property type="nucleotide sequence ID" value="NC_003197.2"/>
</dbReference>
<dbReference type="RefSeq" id="WP_000088022.1">
    <property type="nucleotide sequence ID" value="NC_003197.2"/>
</dbReference>
<dbReference type="SMR" id="Q8ZQW2"/>
<dbReference type="STRING" id="99287.STM0705"/>
<dbReference type="PaxDb" id="99287-STM0705"/>
<dbReference type="GeneID" id="1252225"/>
<dbReference type="KEGG" id="stm:STM0705"/>
<dbReference type="PATRIC" id="fig|99287.12.peg.738"/>
<dbReference type="HOGENOM" id="CLU_025728_2_0_6"/>
<dbReference type="OMA" id="ILWLWFT"/>
<dbReference type="PhylomeDB" id="Q8ZQW2"/>
<dbReference type="BioCyc" id="SENT99287:STM0705-MONOMER"/>
<dbReference type="Proteomes" id="UP000001014">
    <property type="component" value="Chromosome"/>
</dbReference>
<dbReference type="GO" id="GO:0005886">
    <property type="term" value="C:plasma membrane"/>
    <property type="evidence" value="ECO:0000318"/>
    <property type="project" value="GO_Central"/>
</dbReference>
<dbReference type="GO" id="GO:0031004">
    <property type="term" value="C:potassium ion-transporting ATPase complex"/>
    <property type="evidence" value="ECO:0000318"/>
    <property type="project" value="GO_Central"/>
</dbReference>
<dbReference type="GO" id="GO:1903103">
    <property type="term" value="C:potassium:proton antiporter complex"/>
    <property type="evidence" value="ECO:0000318"/>
    <property type="project" value="GO_Central"/>
</dbReference>
<dbReference type="GO" id="GO:0005524">
    <property type="term" value="F:ATP binding"/>
    <property type="evidence" value="ECO:0007669"/>
    <property type="project" value="UniProtKB-UniRule"/>
</dbReference>
<dbReference type="GO" id="GO:0016887">
    <property type="term" value="F:ATP hydrolysis activity"/>
    <property type="evidence" value="ECO:0007669"/>
    <property type="project" value="InterPro"/>
</dbReference>
<dbReference type="GO" id="GO:0000287">
    <property type="term" value="F:magnesium ion binding"/>
    <property type="evidence" value="ECO:0007669"/>
    <property type="project" value="UniProtKB-UniRule"/>
</dbReference>
<dbReference type="GO" id="GO:0008556">
    <property type="term" value="F:P-type potassium transmembrane transporter activity"/>
    <property type="evidence" value="ECO:0000318"/>
    <property type="project" value="GO_Central"/>
</dbReference>
<dbReference type="GO" id="GO:0071805">
    <property type="term" value="P:potassium ion transmembrane transport"/>
    <property type="evidence" value="ECO:0000318"/>
    <property type="project" value="GO_Central"/>
</dbReference>
<dbReference type="CDD" id="cd02078">
    <property type="entry name" value="P-type_ATPase_K"/>
    <property type="match status" value="1"/>
</dbReference>
<dbReference type="FunFam" id="2.70.150.10:FF:000010">
    <property type="entry name" value="Potassium-transporting ATPase ATP-binding subunit"/>
    <property type="match status" value="1"/>
</dbReference>
<dbReference type="FunFam" id="3.40.1110.10:FF:000007">
    <property type="entry name" value="Potassium-transporting ATPase ATP-binding subunit"/>
    <property type="match status" value="1"/>
</dbReference>
<dbReference type="Gene3D" id="3.40.1110.10">
    <property type="entry name" value="Calcium-transporting ATPase, cytoplasmic domain N"/>
    <property type="match status" value="1"/>
</dbReference>
<dbReference type="Gene3D" id="2.70.150.10">
    <property type="entry name" value="Calcium-transporting ATPase, cytoplasmic transduction domain A"/>
    <property type="match status" value="1"/>
</dbReference>
<dbReference type="Gene3D" id="3.40.50.1000">
    <property type="entry name" value="HAD superfamily/HAD-like"/>
    <property type="match status" value="1"/>
</dbReference>
<dbReference type="HAMAP" id="MF_00285">
    <property type="entry name" value="KdpB"/>
    <property type="match status" value="1"/>
</dbReference>
<dbReference type="InterPro" id="IPR023299">
    <property type="entry name" value="ATPase_P-typ_cyto_dom_N"/>
</dbReference>
<dbReference type="InterPro" id="IPR018303">
    <property type="entry name" value="ATPase_P-typ_P_site"/>
</dbReference>
<dbReference type="InterPro" id="IPR023298">
    <property type="entry name" value="ATPase_P-typ_TM_dom_sf"/>
</dbReference>
<dbReference type="InterPro" id="IPR008250">
    <property type="entry name" value="ATPase_P-typ_transduc_dom_A_sf"/>
</dbReference>
<dbReference type="InterPro" id="IPR036412">
    <property type="entry name" value="HAD-like_sf"/>
</dbReference>
<dbReference type="InterPro" id="IPR023214">
    <property type="entry name" value="HAD_sf"/>
</dbReference>
<dbReference type="InterPro" id="IPR006391">
    <property type="entry name" value="P-type_ATPase_bsu_IA"/>
</dbReference>
<dbReference type="InterPro" id="IPR001757">
    <property type="entry name" value="P_typ_ATPase"/>
</dbReference>
<dbReference type="InterPro" id="IPR044492">
    <property type="entry name" value="P_typ_ATPase_HD_dom"/>
</dbReference>
<dbReference type="NCBIfam" id="TIGR01494">
    <property type="entry name" value="ATPase_P-type"/>
    <property type="match status" value="2"/>
</dbReference>
<dbReference type="NCBIfam" id="TIGR01497">
    <property type="entry name" value="kdpB"/>
    <property type="match status" value="1"/>
</dbReference>
<dbReference type="PANTHER" id="PTHR43743">
    <property type="entry name" value="POTASSIUM-TRANSPORTING ATPASE ATP-BINDING SUBUNIT"/>
    <property type="match status" value="1"/>
</dbReference>
<dbReference type="PANTHER" id="PTHR43743:SF1">
    <property type="entry name" value="POTASSIUM-TRANSPORTING ATPASE ATP-BINDING SUBUNIT"/>
    <property type="match status" value="1"/>
</dbReference>
<dbReference type="Pfam" id="PF00122">
    <property type="entry name" value="E1-E2_ATPase"/>
    <property type="match status" value="1"/>
</dbReference>
<dbReference type="Pfam" id="PF00702">
    <property type="entry name" value="Hydrolase"/>
    <property type="match status" value="1"/>
</dbReference>
<dbReference type="PRINTS" id="PR00119">
    <property type="entry name" value="CATATPASE"/>
</dbReference>
<dbReference type="SFLD" id="SFLDS00003">
    <property type="entry name" value="Haloacid_Dehalogenase"/>
    <property type="match status" value="1"/>
</dbReference>
<dbReference type="SFLD" id="SFLDF00027">
    <property type="entry name" value="p-type_atpase"/>
    <property type="match status" value="1"/>
</dbReference>
<dbReference type="SUPFAM" id="SSF81653">
    <property type="entry name" value="Calcium ATPase, transduction domain A"/>
    <property type="match status" value="1"/>
</dbReference>
<dbReference type="SUPFAM" id="SSF81665">
    <property type="entry name" value="Calcium ATPase, transmembrane domain M"/>
    <property type="match status" value="1"/>
</dbReference>
<dbReference type="SUPFAM" id="SSF56784">
    <property type="entry name" value="HAD-like"/>
    <property type="match status" value="1"/>
</dbReference>
<dbReference type="SUPFAM" id="SSF81660">
    <property type="entry name" value="Metal cation-transporting ATPase, ATP-binding domain N"/>
    <property type="match status" value="1"/>
</dbReference>
<dbReference type="PROSITE" id="PS00154">
    <property type="entry name" value="ATPASE_E1_E2"/>
    <property type="match status" value="1"/>
</dbReference>
<reference key="1">
    <citation type="journal article" date="2001" name="Nature">
        <title>Complete genome sequence of Salmonella enterica serovar Typhimurium LT2.</title>
        <authorList>
            <person name="McClelland M."/>
            <person name="Sanderson K.E."/>
            <person name="Spieth J."/>
            <person name="Clifton S.W."/>
            <person name="Latreille P."/>
            <person name="Courtney L."/>
            <person name="Porwollik S."/>
            <person name="Ali J."/>
            <person name="Dante M."/>
            <person name="Du F."/>
            <person name="Hou S."/>
            <person name="Layman D."/>
            <person name="Leonard S."/>
            <person name="Nguyen C."/>
            <person name="Scott K."/>
            <person name="Holmes A."/>
            <person name="Grewal N."/>
            <person name="Mulvaney E."/>
            <person name="Ryan E."/>
            <person name="Sun H."/>
            <person name="Florea L."/>
            <person name="Miller W."/>
            <person name="Stoneking T."/>
            <person name="Nhan M."/>
            <person name="Waterston R."/>
            <person name="Wilson R.K."/>
        </authorList>
    </citation>
    <scope>NUCLEOTIDE SEQUENCE [LARGE SCALE GENOMIC DNA]</scope>
    <source>
        <strain>LT2 / SGSC1412 / ATCC 700720</strain>
    </source>
</reference>
<keyword id="KW-0067">ATP-binding</keyword>
<keyword id="KW-0997">Cell inner membrane</keyword>
<keyword id="KW-1003">Cell membrane</keyword>
<keyword id="KW-0406">Ion transport</keyword>
<keyword id="KW-0460">Magnesium</keyword>
<keyword id="KW-0472">Membrane</keyword>
<keyword id="KW-0479">Metal-binding</keyword>
<keyword id="KW-0547">Nucleotide-binding</keyword>
<keyword id="KW-0597">Phosphoprotein</keyword>
<keyword id="KW-0630">Potassium</keyword>
<keyword id="KW-0633">Potassium transport</keyword>
<keyword id="KW-1185">Reference proteome</keyword>
<keyword id="KW-1278">Translocase</keyword>
<keyword id="KW-0812">Transmembrane</keyword>
<keyword id="KW-1133">Transmembrane helix</keyword>
<keyword id="KW-0813">Transport</keyword>
<comment type="function">
    <text evidence="1">Part of the high-affinity ATP-driven potassium transport (or Kdp) system, which catalyzes the hydrolysis of ATP coupled with the electrogenic transport of potassium into the cytoplasm. This subunit is responsible for energy coupling to the transport system and for the release of the potassium ions to the cytoplasm.</text>
</comment>
<comment type="catalytic activity">
    <reaction evidence="1">
        <text>K(+)(out) + ATP + H2O = K(+)(in) + ADP + phosphate + H(+)</text>
        <dbReference type="Rhea" id="RHEA:16777"/>
        <dbReference type="ChEBI" id="CHEBI:15377"/>
        <dbReference type="ChEBI" id="CHEBI:15378"/>
        <dbReference type="ChEBI" id="CHEBI:29103"/>
        <dbReference type="ChEBI" id="CHEBI:30616"/>
        <dbReference type="ChEBI" id="CHEBI:43474"/>
        <dbReference type="ChEBI" id="CHEBI:456216"/>
        <dbReference type="EC" id="7.2.2.6"/>
    </reaction>
    <physiologicalReaction direction="left-to-right" evidence="1">
        <dbReference type="Rhea" id="RHEA:16778"/>
    </physiologicalReaction>
</comment>
<comment type="subunit">
    <text evidence="1">The system is composed of three essential subunits: KdpA, KdpB and KdpC.</text>
</comment>
<comment type="subcellular location">
    <subcellularLocation>
        <location evidence="1">Cell inner membrane</location>
        <topology evidence="1">Multi-pass membrane protein</topology>
    </subcellularLocation>
</comment>
<comment type="similarity">
    <text evidence="1">Belongs to the cation transport ATPase (P-type) (TC 3.A.3) family. Type IA subfamily.</text>
</comment>
<proteinExistence type="inferred from homology"/>
<name>KDPB_SALTY</name>
<protein>
    <recommendedName>
        <fullName evidence="1">Potassium-transporting ATPase ATP-binding subunit</fullName>
        <ecNumber evidence="1">7.2.2.6</ecNumber>
    </recommendedName>
    <alternativeName>
        <fullName evidence="1">ATP phosphohydrolase [potassium-transporting] B chain</fullName>
    </alternativeName>
    <alternativeName>
        <fullName evidence="1">Potassium-binding and translocating subunit B</fullName>
    </alternativeName>
    <alternativeName>
        <fullName evidence="1">Potassium-translocating ATPase B chain</fullName>
    </alternativeName>
</protein>
<organism>
    <name type="scientific">Salmonella typhimurium (strain LT2 / SGSC1412 / ATCC 700720)</name>
    <dbReference type="NCBI Taxonomy" id="99287"/>
    <lineage>
        <taxon>Bacteria</taxon>
        <taxon>Pseudomonadati</taxon>
        <taxon>Pseudomonadota</taxon>
        <taxon>Gammaproteobacteria</taxon>
        <taxon>Enterobacterales</taxon>
        <taxon>Enterobacteriaceae</taxon>
        <taxon>Salmonella</taxon>
    </lineage>
</organism>
<evidence type="ECO:0000255" key="1">
    <source>
        <dbReference type="HAMAP-Rule" id="MF_00285"/>
    </source>
</evidence>
<sequence>MSRKQLALFEPVLLVQALTDAVKKLSPRAQWRNPVMFVVWAGSVLTTLLTLAMVTGQIAGSALFTGIISLWLWFTVLFANFAEALAEGRSKAQANSLKGVKKTAFARRLRAPRHDAQADNVPAAELRKGDIVLVKAGDIIPCDGEVIEGGASVDESAITGESAPVIRESGGDFASVTGGTRILSDWLVIACSVNPGETFLDRMIAMVEGAQRRKTPNEIALTILLIALTIVFLLATATLWPFSAWGGNAVSVTVLVALLVCLIPTTIGGLLSAIGVAGMSRMLGANVIATSGRAVEAAGDVDVLLLDKTGTITLGNRQASDFIPARGVDERTLADAAQLASLADETPEGRSIVILAKQRFNLRERDVQSLHATFVPFTAQSRMSGINIDNRMIRKGSVDAIRRHVESNGGHFPADVEQNVENVARLGATPLVVVEGAHVLGVIALKDIVKGGIKERFAQLRKMGIKTVMITGDNRLTAAAIAAEAGVDDFLAEATPEAKLALIRQYQAEGRLVAMTGDGTNDAPALAQADVAVAMNSGTQAAKEAGNMVDLDSNPTKLIEVVHIGKQMLMTRGSLTTFSIANDVAKYFAIIPAAFAATYPQLNALNVMGLHSPNSAILSAVIFNALIIIFLIPLALKGVSYKPLSASAMLRRNLWIYGLGGLVVPFIGIKVIDVLLTLLGLA</sequence>
<gene>
    <name evidence="1" type="primary">kdpB</name>
    <name type="ordered locus">STM0705</name>
</gene>
<feature type="chain" id="PRO_0000046133" description="Potassium-transporting ATPase ATP-binding subunit">
    <location>
        <begin position="1"/>
        <end position="682"/>
    </location>
</feature>
<feature type="transmembrane region" description="Helical" evidence="1">
    <location>
        <begin position="34"/>
        <end position="54"/>
    </location>
</feature>
<feature type="transmembrane region" description="Helical" evidence="1">
    <location>
        <begin position="58"/>
        <end position="78"/>
    </location>
</feature>
<feature type="transmembrane region" description="Helical" evidence="1">
    <location>
        <begin position="219"/>
        <end position="239"/>
    </location>
</feature>
<feature type="transmembrane region" description="Helical" evidence="1">
    <location>
        <begin position="254"/>
        <end position="274"/>
    </location>
</feature>
<feature type="transmembrane region" description="Helical" evidence="1">
    <location>
        <begin position="588"/>
        <end position="608"/>
    </location>
</feature>
<feature type="transmembrane region" description="Helical" evidence="1">
    <location>
        <begin position="616"/>
        <end position="636"/>
    </location>
</feature>
<feature type="transmembrane region" description="Helical" evidence="1">
    <location>
        <begin position="662"/>
        <end position="682"/>
    </location>
</feature>
<feature type="active site" description="4-aspartylphosphate intermediate" evidence="1">
    <location>
        <position position="307"/>
    </location>
</feature>
<feature type="binding site" evidence="1">
    <location>
        <position position="344"/>
    </location>
    <ligand>
        <name>ATP</name>
        <dbReference type="ChEBI" id="CHEBI:30616"/>
    </ligand>
</feature>
<feature type="binding site" evidence="1">
    <location>
        <position position="348"/>
    </location>
    <ligand>
        <name>ATP</name>
        <dbReference type="ChEBI" id="CHEBI:30616"/>
    </ligand>
</feature>
<feature type="binding site" evidence="1">
    <location>
        <begin position="377"/>
        <end position="384"/>
    </location>
    <ligand>
        <name>ATP</name>
        <dbReference type="ChEBI" id="CHEBI:30616"/>
    </ligand>
</feature>
<feature type="binding site" evidence="1">
    <location>
        <position position="395"/>
    </location>
    <ligand>
        <name>ATP</name>
        <dbReference type="ChEBI" id="CHEBI:30616"/>
    </ligand>
</feature>
<feature type="binding site" evidence="1">
    <location>
        <position position="518"/>
    </location>
    <ligand>
        <name>Mg(2+)</name>
        <dbReference type="ChEBI" id="CHEBI:18420"/>
    </ligand>
</feature>
<feature type="binding site" evidence="1">
    <location>
        <position position="522"/>
    </location>
    <ligand>
        <name>Mg(2+)</name>
        <dbReference type="ChEBI" id="CHEBI:18420"/>
    </ligand>
</feature>
<accession>Q8ZQW2</accession>